<reference key="1">
    <citation type="journal article" date="2006" name="PLoS Genet.">
        <title>Comparative genomics of emerging human ehrlichiosis agents.</title>
        <authorList>
            <person name="Dunning Hotopp J.C."/>
            <person name="Lin M."/>
            <person name="Madupu R."/>
            <person name="Crabtree J."/>
            <person name="Angiuoli S.V."/>
            <person name="Eisen J.A."/>
            <person name="Seshadri R."/>
            <person name="Ren Q."/>
            <person name="Wu M."/>
            <person name="Utterback T.R."/>
            <person name="Smith S."/>
            <person name="Lewis M."/>
            <person name="Khouri H."/>
            <person name="Zhang C."/>
            <person name="Niu H."/>
            <person name="Lin Q."/>
            <person name="Ohashi N."/>
            <person name="Zhi N."/>
            <person name="Nelson W.C."/>
            <person name="Brinkac L.M."/>
            <person name="Dodson R.J."/>
            <person name="Rosovitz M.J."/>
            <person name="Sundaram J.P."/>
            <person name="Daugherty S.C."/>
            <person name="Davidsen T."/>
            <person name="Durkin A.S."/>
            <person name="Gwinn M.L."/>
            <person name="Haft D.H."/>
            <person name="Selengut J.D."/>
            <person name="Sullivan S.A."/>
            <person name="Zafar N."/>
            <person name="Zhou L."/>
            <person name="Benahmed F."/>
            <person name="Forberger H."/>
            <person name="Halpin R."/>
            <person name="Mulligan S."/>
            <person name="Robinson J."/>
            <person name="White O."/>
            <person name="Rikihisa Y."/>
            <person name="Tettelin H."/>
        </authorList>
    </citation>
    <scope>NUCLEOTIDE SEQUENCE [LARGE SCALE GENOMIC DNA]</scope>
    <source>
        <strain>ATCC VR-367 / Miyayama</strain>
    </source>
</reference>
<keyword id="KW-0687">Ribonucleoprotein</keyword>
<keyword id="KW-0689">Ribosomal protein</keyword>
<dbReference type="EMBL" id="CP000237">
    <property type="protein sequence ID" value="ABD46514.1"/>
    <property type="status" value="ALT_INIT"/>
    <property type="molecule type" value="Genomic_DNA"/>
</dbReference>
<dbReference type="RefSeq" id="WP_041351575.1">
    <property type="nucleotide sequence ID" value="NC_007798.1"/>
</dbReference>
<dbReference type="SMR" id="Q2GEI7"/>
<dbReference type="STRING" id="222891.NSE_0214"/>
<dbReference type="KEGG" id="nse:NSE_0214"/>
<dbReference type="eggNOG" id="COG0291">
    <property type="taxonomic scope" value="Bacteria"/>
</dbReference>
<dbReference type="HOGENOM" id="CLU_169643_2_1_5"/>
<dbReference type="Proteomes" id="UP000001942">
    <property type="component" value="Chromosome"/>
</dbReference>
<dbReference type="GO" id="GO:0022625">
    <property type="term" value="C:cytosolic large ribosomal subunit"/>
    <property type="evidence" value="ECO:0007669"/>
    <property type="project" value="TreeGrafter"/>
</dbReference>
<dbReference type="GO" id="GO:0003735">
    <property type="term" value="F:structural constituent of ribosome"/>
    <property type="evidence" value="ECO:0007669"/>
    <property type="project" value="InterPro"/>
</dbReference>
<dbReference type="GO" id="GO:0006412">
    <property type="term" value="P:translation"/>
    <property type="evidence" value="ECO:0007669"/>
    <property type="project" value="UniProtKB-UniRule"/>
</dbReference>
<dbReference type="FunFam" id="4.10.410.60:FF:000001">
    <property type="entry name" value="50S ribosomal protein L35"/>
    <property type="match status" value="1"/>
</dbReference>
<dbReference type="Gene3D" id="4.10.410.60">
    <property type="match status" value="1"/>
</dbReference>
<dbReference type="HAMAP" id="MF_00514">
    <property type="entry name" value="Ribosomal_bL35"/>
    <property type="match status" value="1"/>
</dbReference>
<dbReference type="InterPro" id="IPR001706">
    <property type="entry name" value="Ribosomal_bL35"/>
</dbReference>
<dbReference type="InterPro" id="IPR021137">
    <property type="entry name" value="Ribosomal_bL35-like"/>
</dbReference>
<dbReference type="InterPro" id="IPR018265">
    <property type="entry name" value="Ribosomal_bL35_CS"/>
</dbReference>
<dbReference type="InterPro" id="IPR037229">
    <property type="entry name" value="Ribosomal_bL35_sf"/>
</dbReference>
<dbReference type="PANTHER" id="PTHR33343">
    <property type="entry name" value="54S RIBOSOMAL PROTEIN BL35M"/>
    <property type="match status" value="1"/>
</dbReference>
<dbReference type="PANTHER" id="PTHR33343:SF1">
    <property type="entry name" value="LARGE RIBOSOMAL SUBUNIT PROTEIN BL35M"/>
    <property type="match status" value="1"/>
</dbReference>
<dbReference type="Pfam" id="PF01632">
    <property type="entry name" value="Ribosomal_L35p"/>
    <property type="match status" value="1"/>
</dbReference>
<dbReference type="PRINTS" id="PR00064">
    <property type="entry name" value="RIBOSOMALL35"/>
</dbReference>
<dbReference type="SUPFAM" id="SSF143034">
    <property type="entry name" value="L35p-like"/>
    <property type="match status" value="1"/>
</dbReference>
<dbReference type="PROSITE" id="PS00936">
    <property type="entry name" value="RIBOSOMAL_L35"/>
    <property type="match status" value="1"/>
</dbReference>
<proteinExistence type="inferred from homology"/>
<accession>Q2GEI7</accession>
<gene>
    <name evidence="1" type="primary">rpmI</name>
    <name type="ordered locus">NSE_0214</name>
</gene>
<sequence>MPKLKTNSSAKKRFKVTSTGKVMVTQSGKRHNMRKRNKRMLLVQKGYTLISKSKMRLMRSVMPYSF</sequence>
<protein>
    <recommendedName>
        <fullName evidence="1">Large ribosomal subunit protein bL35</fullName>
    </recommendedName>
    <alternativeName>
        <fullName evidence="2">50S ribosomal protein L35</fullName>
    </alternativeName>
</protein>
<name>RL35_NEOSM</name>
<evidence type="ECO:0000255" key="1">
    <source>
        <dbReference type="HAMAP-Rule" id="MF_00514"/>
    </source>
</evidence>
<evidence type="ECO:0000305" key="2"/>
<feature type="chain" id="PRO_0000258712" description="Large ribosomal subunit protein bL35">
    <location>
        <begin position="1"/>
        <end position="66"/>
    </location>
</feature>
<comment type="similarity">
    <text evidence="1">Belongs to the bacterial ribosomal protein bL35 family.</text>
</comment>
<comment type="sequence caution" evidence="2">
    <conflict type="erroneous initiation">
        <sequence resource="EMBL-CDS" id="ABD46514"/>
    </conflict>
</comment>
<organism>
    <name type="scientific">Neorickettsia sennetsu (strain ATCC VR-367 / Miyayama)</name>
    <name type="common">Ehrlichia sennetsu</name>
    <dbReference type="NCBI Taxonomy" id="222891"/>
    <lineage>
        <taxon>Bacteria</taxon>
        <taxon>Pseudomonadati</taxon>
        <taxon>Pseudomonadota</taxon>
        <taxon>Alphaproteobacteria</taxon>
        <taxon>Rickettsiales</taxon>
        <taxon>Anaplasmataceae</taxon>
        <taxon>Neorickettsia</taxon>
    </lineage>
</organism>